<protein>
    <recommendedName>
        <fullName evidence="5">Large ribosomal subunit protein uL3</fullName>
    </recommendedName>
    <alternativeName>
        <fullName>60S ribosomal protein L3</fullName>
    </alternativeName>
    <alternativeName>
        <fullName>L4</fullName>
    </alternativeName>
</protein>
<evidence type="ECO:0000250" key="1">
    <source>
        <dbReference type="UniProtKB" id="P27659"/>
    </source>
</evidence>
<evidence type="ECO:0000250" key="2">
    <source>
        <dbReference type="UniProtKB" id="P39023"/>
    </source>
</evidence>
<evidence type="ECO:0000256" key="3">
    <source>
        <dbReference type="SAM" id="MobiDB-lite"/>
    </source>
</evidence>
<evidence type="ECO:0000269" key="4">
    <source>
    </source>
</evidence>
<evidence type="ECO:0000305" key="5"/>
<accession>P21531</accession>
<feature type="initiator methionine" description="Removed" evidence="4">
    <location>
        <position position="1"/>
    </location>
</feature>
<feature type="chain" id="PRO_0000077231" description="Large ribosomal subunit protein uL3">
    <location>
        <begin position="2"/>
        <end position="403"/>
    </location>
</feature>
<feature type="region of interest" description="Disordered" evidence="3">
    <location>
        <begin position="1"/>
        <end position="37"/>
    </location>
</feature>
<feature type="compositionally biased region" description="Basic residues" evidence="3">
    <location>
        <begin position="18"/>
        <end position="31"/>
    </location>
</feature>
<feature type="modified residue" description="Phosphoserine" evidence="2">
    <location>
        <position position="13"/>
    </location>
</feature>
<feature type="modified residue" description="N6-acetyllysine" evidence="1">
    <location>
        <position position="136"/>
    </location>
</feature>
<feature type="modified residue" description="Tele-methylhistidine" evidence="2">
    <location>
        <position position="245"/>
    </location>
</feature>
<feature type="modified residue" description="N6-acetyllysine; alternate" evidence="1">
    <location>
        <position position="286"/>
    </location>
</feature>
<feature type="modified residue" description="N6-acetyllysine; alternate" evidence="2">
    <location>
        <position position="294"/>
    </location>
</feature>
<feature type="modified residue" description="Phosphoserine" evidence="2">
    <location>
        <position position="304"/>
    </location>
</feature>
<feature type="modified residue" description="N6-acetyllysine; alternate" evidence="2">
    <location>
        <position position="366"/>
    </location>
</feature>
<feature type="modified residue" description="N6-acetyllysine" evidence="1">
    <location>
        <position position="373"/>
    </location>
</feature>
<feature type="cross-link" description="Glycyl lysine isopeptide (Lys-Gly) (interchain with G-Cter in SUMO2)" evidence="2">
    <location>
        <position position="39"/>
    </location>
</feature>
<feature type="cross-link" description="Glycyl lysine isopeptide (Lys-Gly) (interchain with G-Cter in SUMO2)" evidence="2">
    <location>
        <position position="224"/>
    </location>
</feature>
<feature type="cross-link" description="Glycyl lysine isopeptide (Lys-Gly) (interchain with G-Cter in SUMO2)" evidence="2">
    <location>
        <position position="226"/>
    </location>
</feature>
<feature type="cross-link" description="Glycyl lysine isopeptide (Lys-Gly) (interchain with G-Cter in SUMO2); alternate" evidence="2">
    <location>
        <position position="286"/>
    </location>
</feature>
<feature type="cross-link" description="Glycyl lysine isopeptide (Lys-Gly) (interchain with G-Cter in SUMO1); alternate" evidence="2">
    <location>
        <position position="294"/>
    </location>
</feature>
<feature type="cross-link" description="Glycyl lysine isopeptide (Lys-Gly) (interchain with G-Cter in SUMO2); alternate" evidence="2">
    <location>
        <position position="366"/>
    </location>
</feature>
<feature type="cross-link" description="Glycyl lysine isopeptide (Lys-Gly) (interchain with G-Cter in SUMO2)" evidence="2">
    <location>
        <position position="386"/>
    </location>
</feature>
<feature type="cross-link" description="Glycyl lysine isopeptide (Lys-Gly) (interchain with G-Cter in SUMO2)" evidence="2">
    <location>
        <position position="393"/>
    </location>
</feature>
<feature type="cross-link" description="Glycyl lysine isopeptide (Lys-Gly) (interchain with G-Cter in SUMO2)" evidence="2">
    <location>
        <position position="399"/>
    </location>
</feature>
<feature type="sequence conflict" description="In Ref. 3; AA sequence." evidence="5" ref="3">
    <original>R</original>
    <variation>T</variation>
    <location>
        <position position="19"/>
    </location>
</feature>
<keyword id="KW-0002">3D-structure</keyword>
<keyword id="KW-0007">Acetylation</keyword>
<keyword id="KW-0963">Cytoplasm</keyword>
<keyword id="KW-0903">Direct protein sequencing</keyword>
<keyword id="KW-1017">Isopeptide bond</keyword>
<keyword id="KW-0488">Methylation</keyword>
<keyword id="KW-0539">Nucleus</keyword>
<keyword id="KW-0597">Phosphoprotein</keyword>
<keyword id="KW-1185">Reference proteome</keyword>
<keyword id="KW-0687">Ribonucleoprotein</keyword>
<keyword id="KW-0689">Ribosomal protein</keyword>
<keyword id="KW-0832">Ubl conjugation</keyword>
<reference key="1">
    <citation type="journal article" date="1992" name="Biochem. Biophys. Res. Commun.">
        <title>The primary structure of rat ribosomal protein L3.</title>
        <authorList>
            <person name="Kuwano Y."/>
            <person name="Wool I.G."/>
        </authorList>
    </citation>
    <scope>NUCLEOTIDE SEQUENCE [MRNA]</scope>
    <source>
        <strain>Sprague-Dawley</strain>
        <tissue>Liver</tissue>
    </source>
</reference>
<reference key="2">
    <citation type="journal article" date="2004" name="Genome Res.">
        <title>The status, quality, and expansion of the NIH full-length cDNA project: the Mammalian Gene Collection (MGC).</title>
        <authorList>
            <consortium name="The MGC Project Team"/>
        </authorList>
    </citation>
    <scope>NUCLEOTIDE SEQUENCE [LARGE SCALE MRNA]</scope>
    <source>
        <tissue>Pituitary</tissue>
    </source>
</reference>
<reference key="3">
    <citation type="journal article" date="1983" name="Mol. Gen. Genet.">
        <title>Yeast ribosomal proteins: VII. Cytoplasmic ribosomal proteins from Schizosaccharomyces pombe.</title>
        <authorList>
            <person name="Otaka E."/>
            <person name="Higo K."/>
            <person name="Itoh T."/>
        </authorList>
    </citation>
    <scope>PROTEIN SEQUENCE OF 2-20</scope>
</reference>
<dbReference type="EMBL" id="X62166">
    <property type="protein sequence ID" value="CAA44095.1"/>
    <property type="molecule type" value="mRNA"/>
</dbReference>
<dbReference type="EMBL" id="BC058494">
    <property type="protein sequence ID" value="AAH58494.1"/>
    <property type="molecule type" value="mRNA"/>
</dbReference>
<dbReference type="PIR" id="JQ1536">
    <property type="entry name" value="R5RT3L"/>
</dbReference>
<dbReference type="RefSeq" id="NP_942048.1">
    <property type="nucleotide sequence ID" value="NM_198753.3"/>
</dbReference>
<dbReference type="PDB" id="7QGG">
    <property type="method" value="EM"/>
    <property type="resolution" value="2.86 A"/>
    <property type="chains" value="B=1-403"/>
</dbReference>
<dbReference type="PDBsum" id="7QGG"/>
<dbReference type="EMDB" id="EMD-13954"/>
<dbReference type="SMR" id="P21531"/>
<dbReference type="BioGRID" id="256443">
    <property type="interactions" value="5"/>
</dbReference>
<dbReference type="FunCoup" id="P21531">
    <property type="interactions" value="2698"/>
</dbReference>
<dbReference type="IntAct" id="P21531">
    <property type="interactions" value="5"/>
</dbReference>
<dbReference type="STRING" id="10116.ENSRNOP00000060662"/>
<dbReference type="iPTMnet" id="P21531"/>
<dbReference type="PhosphoSitePlus" id="P21531"/>
<dbReference type="SwissPalm" id="P21531"/>
<dbReference type="jPOST" id="P21531"/>
<dbReference type="PaxDb" id="10116-ENSRNOP00000060662"/>
<dbReference type="GeneID" id="300079"/>
<dbReference type="KEGG" id="rno:300079"/>
<dbReference type="UCSC" id="RGD:735105">
    <property type="organism name" value="rat"/>
</dbReference>
<dbReference type="AGR" id="RGD:735105"/>
<dbReference type="CTD" id="6122"/>
<dbReference type="RGD" id="735105">
    <property type="gene designation" value="Rpl3"/>
</dbReference>
<dbReference type="VEuPathDB" id="HostDB:ENSRNOG00000016896"/>
<dbReference type="eggNOG" id="KOG0746">
    <property type="taxonomic scope" value="Eukaryota"/>
</dbReference>
<dbReference type="HOGENOM" id="CLU_033361_2_1_1"/>
<dbReference type="InParanoid" id="P21531"/>
<dbReference type="OrthoDB" id="1611972at2759"/>
<dbReference type="PhylomeDB" id="P21531"/>
<dbReference type="TreeFam" id="TF300555"/>
<dbReference type="Reactome" id="R-RNO-156827">
    <property type="pathway name" value="L13a-mediated translational silencing of Ceruloplasmin expression"/>
</dbReference>
<dbReference type="Reactome" id="R-RNO-1799339">
    <property type="pathway name" value="SRP-dependent cotranslational protein targeting to membrane"/>
</dbReference>
<dbReference type="Reactome" id="R-RNO-6791226">
    <property type="pathway name" value="Major pathway of rRNA processing in the nucleolus and cytosol"/>
</dbReference>
<dbReference type="Reactome" id="R-RNO-72689">
    <property type="pathway name" value="Formation of a pool of free 40S subunits"/>
</dbReference>
<dbReference type="Reactome" id="R-RNO-72706">
    <property type="pathway name" value="GTP hydrolysis and joining of the 60S ribosomal subunit"/>
</dbReference>
<dbReference type="Reactome" id="R-RNO-975956">
    <property type="pathway name" value="Nonsense Mediated Decay (NMD) independent of the Exon Junction Complex (EJC)"/>
</dbReference>
<dbReference type="Reactome" id="R-RNO-975957">
    <property type="pathway name" value="Nonsense Mediated Decay (NMD) enhanced by the Exon Junction Complex (EJC)"/>
</dbReference>
<dbReference type="PRO" id="PR:P21531"/>
<dbReference type="Proteomes" id="UP000002494">
    <property type="component" value="Chromosome 7"/>
</dbReference>
<dbReference type="Bgee" id="ENSRNOG00000016896">
    <property type="expression patterns" value="Expressed in Ammon's horn and 20 other cell types or tissues"/>
</dbReference>
<dbReference type="ExpressionAtlas" id="P21531">
    <property type="expression patterns" value="baseline and differential"/>
</dbReference>
<dbReference type="GO" id="GO:0005737">
    <property type="term" value="C:cytoplasm"/>
    <property type="evidence" value="ECO:0000266"/>
    <property type="project" value="RGD"/>
</dbReference>
<dbReference type="GO" id="GO:0022625">
    <property type="term" value="C:cytosolic large ribosomal subunit"/>
    <property type="evidence" value="ECO:0000314"/>
    <property type="project" value="RGD"/>
</dbReference>
<dbReference type="GO" id="GO:0022626">
    <property type="term" value="C:cytosolic ribosome"/>
    <property type="evidence" value="ECO:0000266"/>
    <property type="project" value="RGD"/>
</dbReference>
<dbReference type="GO" id="GO:0005730">
    <property type="term" value="C:nucleolus"/>
    <property type="evidence" value="ECO:0000250"/>
    <property type="project" value="UniProtKB"/>
</dbReference>
<dbReference type="GO" id="GO:0032991">
    <property type="term" value="C:protein-containing complex"/>
    <property type="evidence" value="ECO:0000266"/>
    <property type="project" value="RGD"/>
</dbReference>
<dbReference type="GO" id="GO:0005840">
    <property type="term" value="C:ribosome"/>
    <property type="evidence" value="ECO:0000314"/>
    <property type="project" value="RGD"/>
</dbReference>
<dbReference type="GO" id="GO:0045202">
    <property type="term" value="C:synapse"/>
    <property type="evidence" value="ECO:0000314"/>
    <property type="project" value="SynGO"/>
</dbReference>
<dbReference type="GO" id="GO:0008097">
    <property type="term" value="F:5S rRNA binding"/>
    <property type="evidence" value="ECO:0000314"/>
    <property type="project" value="RGD"/>
</dbReference>
<dbReference type="GO" id="GO:0003723">
    <property type="term" value="F:RNA binding"/>
    <property type="evidence" value="ECO:0000318"/>
    <property type="project" value="GO_Central"/>
</dbReference>
<dbReference type="GO" id="GO:0003735">
    <property type="term" value="F:structural constituent of ribosome"/>
    <property type="evidence" value="ECO:0000266"/>
    <property type="project" value="RGD"/>
</dbReference>
<dbReference type="GO" id="GO:0071353">
    <property type="term" value="P:cellular response to interleukin-4"/>
    <property type="evidence" value="ECO:0000266"/>
    <property type="project" value="RGD"/>
</dbReference>
<dbReference type="GO" id="GO:0006412">
    <property type="term" value="P:translation"/>
    <property type="evidence" value="ECO:0000318"/>
    <property type="project" value="GO_Central"/>
</dbReference>
<dbReference type="FunFam" id="2.40.30.10:FF:000079">
    <property type="entry name" value="60S ribosomal protein L3"/>
    <property type="match status" value="1"/>
</dbReference>
<dbReference type="FunFam" id="3.30.1430.10:FF:000001">
    <property type="entry name" value="60S ribosomal protein L3"/>
    <property type="match status" value="1"/>
</dbReference>
<dbReference type="FunFam" id="4.10.960.10:FF:000002">
    <property type="entry name" value="60S ribosomal protein L3"/>
    <property type="match status" value="1"/>
</dbReference>
<dbReference type="FunFam" id="4.10.960.10:FF:000004">
    <property type="entry name" value="60S ribosomal protein L3"/>
    <property type="match status" value="1"/>
</dbReference>
<dbReference type="FunFam" id="2.40.30.10:FF:000351">
    <property type="entry name" value="Ribosomal protein L3"/>
    <property type="match status" value="1"/>
</dbReference>
<dbReference type="Gene3D" id="3.30.1430.10">
    <property type="match status" value="1"/>
</dbReference>
<dbReference type="Gene3D" id="4.10.960.10">
    <property type="entry name" value="Ribosomal protein L3, domain 3"/>
    <property type="match status" value="1"/>
</dbReference>
<dbReference type="Gene3D" id="2.40.30.10">
    <property type="entry name" value="Translation factors"/>
    <property type="match status" value="1"/>
</dbReference>
<dbReference type="InterPro" id="IPR045077">
    <property type="entry name" value="L3_arc_euk"/>
</dbReference>
<dbReference type="InterPro" id="IPR044892">
    <property type="entry name" value="Ribosomal_L3_dom_3_arc_sf"/>
</dbReference>
<dbReference type="InterPro" id="IPR000597">
    <property type="entry name" value="Ribosomal_uL3"/>
</dbReference>
<dbReference type="InterPro" id="IPR019926">
    <property type="entry name" value="Ribosomal_uL3_CS"/>
</dbReference>
<dbReference type="InterPro" id="IPR009000">
    <property type="entry name" value="Transl_B-barrel_sf"/>
</dbReference>
<dbReference type="PANTHER" id="PTHR11363">
    <property type="entry name" value="60S RIBOSOMAL PROTEIN L3-RELATED"/>
    <property type="match status" value="1"/>
</dbReference>
<dbReference type="PANTHER" id="PTHR11363:SF4">
    <property type="entry name" value="LARGE RIBOSOMAL SUBUNIT PROTEIN UL3"/>
    <property type="match status" value="1"/>
</dbReference>
<dbReference type="Pfam" id="PF00297">
    <property type="entry name" value="Ribosomal_L3"/>
    <property type="match status" value="1"/>
</dbReference>
<dbReference type="SUPFAM" id="SSF50447">
    <property type="entry name" value="Translation proteins"/>
    <property type="match status" value="1"/>
</dbReference>
<dbReference type="PROSITE" id="PS00474">
    <property type="entry name" value="RIBOSOMAL_L3"/>
    <property type="match status" value="1"/>
</dbReference>
<comment type="function">
    <text evidence="2">Component of the large ribosomal subunit. The ribosome is a large ribonucleoprotein complex responsible for the synthesis of proteins in the cell.</text>
</comment>
<comment type="subunit">
    <text evidence="2">Component of the large ribosomal subunit. Interacts with DHX33.</text>
</comment>
<comment type="subcellular location">
    <subcellularLocation>
        <location evidence="2">Nucleus</location>
        <location evidence="2">Nucleolus</location>
    </subcellularLocation>
    <subcellularLocation>
        <location evidence="2">Cytoplasm</location>
    </subcellularLocation>
</comment>
<comment type="PTM">
    <text evidence="2">Constitutively monomethylated at His-245 by METTL18. Methylation at His-245 regulates translation elongation by slowing ribosome traversal on tyrosine codons: slower elongation provides enough time for proper folding of synthesized proteins and prevents cellular aggregation of tyrosine-rich proteins. It is not required for incorporation of RPL3 into ribosomes.</text>
</comment>
<comment type="similarity">
    <text evidence="5">Belongs to the universal ribosomal protein uL3 family.</text>
</comment>
<organism>
    <name type="scientific">Rattus norvegicus</name>
    <name type="common">Rat</name>
    <dbReference type="NCBI Taxonomy" id="10116"/>
    <lineage>
        <taxon>Eukaryota</taxon>
        <taxon>Metazoa</taxon>
        <taxon>Chordata</taxon>
        <taxon>Craniata</taxon>
        <taxon>Vertebrata</taxon>
        <taxon>Euteleostomi</taxon>
        <taxon>Mammalia</taxon>
        <taxon>Eutheria</taxon>
        <taxon>Euarchontoglires</taxon>
        <taxon>Glires</taxon>
        <taxon>Rodentia</taxon>
        <taxon>Myomorpha</taxon>
        <taxon>Muroidea</taxon>
        <taxon>Muridae</taxon>
        <taxon>Murinae</taxon>
        <taxon>Rattus</taxon>
    </lineage>
</organism>
<sequence length="403" mass="46136">MSHRKFSAPRHGSLGFLPRKRSSRHRGKVKSFPKDDPSKPVHLTAFLGYKAGMTHIVREVDRPGSKVNKKEVVEAVTIVETPPMVVVGIVGYVETPRGLRTFKTVFAEHISDECKRRFYKNWHKSKKKAFTKYCKKWQDDTGKKQLEKDFNSMKKYCQVIRIIAHTQMRLLPLRQKKAHLMEIQVNGGTVAEKLDWARERLEQQVPVNQVFGQDEMIDVIGVTKGKGYKGVTSRWHTKKLPRKTHRGLRKVACIGAWHPARVAFSVARAGQKGYHHRTEINKKIYKIGQGYLIKDGKLIKNNASTDYDLSDKSINPLGGFVHYGEVTNDFIMLKGCVVGTKKRVLTLRKSLLVQTKRRALEKIDLKFIDTTSKFGHGRFQTMEEKKAFMGPLKKDRIAKEEGA</sequence>
<gene>
    <name type="primary">Rpl3</name>
</gene>
<name>RL3_RAT</name>
<proteinExistence type="evidence at protein level"/>